<reference key="1">
    <citation type="journal article" date="1992" name="Nat. Genet.">
        <title>Expressed genes, Alu repeats and polymorphisms in cosmids sequenced from chromosome 4p16.3.</title>
        <authorList>
            <person name="McCombie W.R."/>
            <person name="Martin-Gallardo A."/>
            <person name="Gocayne J.D."/>
            <person name="FitzGerald M."/>
            <person name="Dubnick M."/>
            <person name="Kelley J.M."/>
            <person name="Castilla L."/>
            <person name="Liu L.I."/>
            <person name="Wallace S."/>
            <person name="Trapp S."/>
            <person name="Tagle D."/>
            <person name="Whaley W.L."/>
            <person name="Cheng S."/>
            <person name="Gusella J."/>
            <person name="Frischauf A.-M."/>
            <person name="Poustka A."/>
            <person name="Lehrach H."/>
            <person name="Collins F.S."/>
            <person name="Kerlavage A.R."/>
            <person name="Fields C."/>
            <person name="Venter J.C."/>
        </authorList>
    </citation>
    <scope>NUCLEOTIDE SEQUENCE [GENOMIC DNA] (ISOFORM 1)</scope>
</reference>
<reference key="2">
    <citation type="journal article" date="1996" name="Genes Dev.">
        <title>The protein that binds the 3' end of histone mRNA: a novel RNA-binding protein required for histone pre-mRNA processing.</title>
        <authorList>
            <person name="Wang Z.-F."/>
            <person name="Whitfield M.L."/>
            <person name="Ingledue T.C. III"/>
            <person name="Dominski Z."/>
            <person name="Marzluff W.F."/>
        </authorList>
    </citation>
    <scope>NUCLEOTIDE SEQUENCE [MRNA] (ISOFORM 1)</scope>
    <scope>FUNCTION</scope>
    <source>
        <tissue>Cervix adenocarcinoma</tissue>
    </source>
</reference>
<reference key="3">
    <citation type="journal article" date="1997" name="EMBO J.">
        <title>The gene for histone RNA hairpin binding protein is located on human chromosome 4 and encodes a novel type of RNA binding protein.</title>
        <authorList>
            <person name="Martin F."/>
            <person name="Schaller A."/>
            <person name="Eglite S."/>
            <person name="Schuemperli D."/>
            <person name="Mueller B."/>
        </authorList>
    </citation>
    <scope>NUCLEOTIDE SEQUENCE [MRNA] (ISOFORM 1)</scope>
    <scope>FUNCTION</scope>
    <scope>TISSUE SPECIFICITY</scope>
    <source>
        <tissue>Lymphocyte</tissue>
    </source>
</reference>
<reference key="4">
    <citation type="journal article" date="2004" name="Nat. Genet.">
        <title>Complete sequencing and characterization of 21,243 full-length human cDNAs.</title>
        <authorList>
            <person name="Ota T."/>
            <person name="Suzuki Y."/>
            <person name="Nishikawa T."/>
            <person name="Otsuki T."/>
            <person name="Sugiyama T."/>
            <person name="Irie R."/>
            <person name="Wakamatsu A."/>
            <person name="Hayashi K."/>
            <person name="Sato H."/>
            <person name="Nagai K."/>
            <person name="Kimura K."/>
            <person name="Makita H."/>
            <person name="Sekine M."/>
            <person name="Obayashi M."/>
            <person name="Nishi T."/>
            <person name="Shibahara T."/>
            <person name="Tanaka T."/>
            <person name="Ishii S."/>
            <person name="Yamamoto J."/>
            <person name="Saito K."/>
            <person name="Kawai Y."/>
            <person name="Isono Y."/>
            <person name="Nakamura Y."/>
            <person name="Nagahari K."/>
            <person name="Murakami K."/>
            <person name="Yasuda T."/>
            <person name="Iwayanagi T."/>
            <person name="Wagatsuma M."/>
            <person name="Shiratori A."/>
            <person name="Sudo H."/>
            <person name="Hosoiri T."/>
            <person name="Kaku Y."/>
            <person name="Kodaira H."/>
            <person name="Kondo H."/>
            <person name="Sugawara M."/>
            <person name="Takahashi M."/>
            <person name="Kanda K."/>
            <person name="Yokoi T."/>
            <person name="Furuya T."/>
            <person name="Kikkawa E."/>
            <person name="Omura Y."/>
            <person name="Abe K."/>
            <person name="Kamihara K."/>
            <person name="Katsuta N."/>
            <person name="Sato K."/>
            <person name="Tanikawa M."/>
            <person name="Yamazaki M."/>
            <person name="Ninomiya K."/>
            <person name="Ishibashi T."/>
            <person name="Yamashita H."/>
            <person name="Murakawa K."/>
            <person name="Fujimori K."/>
            <person name="Tanai H."/>
            <person name="Kimata M."/>
            <person name="Watanabe M."/>
            <person name="Hiraoka S."/>
            <person name="Chiba Y."/>
            <person name="Ishida S."/>
            <person name="Ono Y."/>
            <person name="Takiguchi S."/>
            <person name="Watanabe S."/>
            <person name="Yosida M."/>
            <person name="Hotuta T."/>
            <person name="Kusano J."/>
            <person name="Kanehori K."/>
            <person name="Takahashi-Fujii A."/>
            <person name="Hara H."/>
            <person name="Tanase T.-O."/>
            <person name="Nomura Y."/>
            <person name="Togiya S."/>
            <person name="Komai F."/>
            <person name="Hara R."/>
            <person name="Takeuchi K."/>
            <person name="Arita M."/>
            <person name="Imose N."/>
            <person name="Musashino K."/>
            <person name="Yuuki H."/>
            <person name="Oshima A."/>
            <person name="Sasaki N."/>
            <person name="Aotsuka S."/>
            <person name="Yoshikawa Y."/>
            <person name="Matsunawa H."/>
            <person name="Ichihara T."/>
            <person name="Shiohata N."/>
            <person name="Sano S."/>
            <person name="Moriya S."/>
            <person name="Momiyama H."/>
            <person name="Satoh N."/>
            <person name="Takami S."/>
            <person name="Terashima Y."/>
            <person name="Suzuki O."/>
            <person name="Nakagawa S."/>
            <person name="Senoh A."/>
            <person name="Mizoguchi H."/>
            <person name="Goto Y."/>
            <person name="Shimizu F."/>
            <person name="Wakebe H."/>
            <person name="Hishigaki H."/>
            <person name="Watanabe T."/>
            <person name="Sugiyama A."/>
            <person name="Takemoto M."/>
            <person name="Kawakami B."/>
            <person name="Yamazaki M."/>
            <person name="Watanabe K."/>
            <person name="Kumagai A."/>
            <person name="Itakura S."/>
            <person name="Fukuzumi Y."/>
            <person name="Fujimori Y."/>
            <person name="Komiyama M."/>
            <person name="Tashiro H."/>
            <person name="Tanigami A."/>
            <person name="Fujiwara T."/>
            <person name="Ono T."/>
            <person name="Yamada K."/>
            <person name="Fujii Y."/>
            <person name="Ozaki K."/>
            <person name="Hirao M."/>
            <person name="Ohmori Y."/>
            <person name="Kawabata A."/>
            <person name="Hikiji T."/>
            <person name="Kobatake N."/>
            <person name="Inagaki H."/>
            <person name="Ikema Y."/>
            <person name="Okamoto S."/>
            <person name="Okitani R."/>
            <person name="Kawakami T."/>
            <person name="Noguchi S."/>
            <person name="Itoh T."/>
            <person name="Shigeta K."/>
            <person name="Senba T."/>
            <person name="Matsumura K."/>
            <person name="Nakajima Y."/>
            <person name="Mizuno T."/>
            <person name="Morinaga M."/>
            <person name="Sasaki M."/>
            <person name="Togashi T."/>
            <person name="Oyama M."/>
            <person name="Hata H."/>
            <person name="Watanabe M."/>
            <person name="Komatsu T."/>
            <person name="Mizushima-Sugano J."/>
            <person name="Satoh T."/>
            <person name="Shirai Y."/>
            <person name="Takahashi Y."/>
            <person name="Nakagawa K."/>
            <person name="Okumura K."/>
            <person name="Nagase T."/>
            <person name="Nomura N."/>
            <person name="Kikuchi H."/>
            <person name="Masuho Y."/>
            <person name="Yamashita R."/>
            <person name="Nakai K."/>
            <person name="Yada T."/>
            <person name="Nakamura Y."/>
            <person name="Ohara O."/>
            <person name="Isogai T."/>
            <person name="Sugano S."/>
        </authorList>
    </citation>
    <scope>NUCLEOTIDE SEQUENCE [LARGE SCALE MRNA] (ISOFORM 2)</scope>
    <source>
        <tissue>Heart</tissue>
    </source>
</reference>
<reference key="5">
    <citation type="journal article" date="2005" name="Nature">
        <title>Generation and annotation of the DNA sequences of human chromosomes 2 and 4.</title>
        <authorList>
            <person name="Hillier L.W."/>
            <person name="Graves T.A."/>
            <person name="Fulton R.S."/>
            <person name="Fulton L.A."/>
            <person name="Pepin K.H."/>
            <person name="Minx P."/>
            <person name="Wagner-McPherson C."/>
            <person name="Layman D."/>
            <person name="Wylie K."/>
            <person name="Sekhon M."/>
            <person name="Becker M.C."/>
            <person name="Fewell G.A."/>
            <person name="Delehaunty K.D."/>
            <person name="Miner T.L."/>
            <person name="Nash W.E."/>
            <person name="Kremitzki C."/>
            <person name="Oddy L."/>
            <person name="Du H."/>
            <person name="Sun H."/>
            <person name="Bradshaw-Cordum H."/>
            <person name="Ali J."/>
            <person name="Carter J."/>
            <person name="Cordes M."/>
            <person name="Harris A."/>
            <person name="Isak A."/>
            <person name="van Brunt A."/>
            <person name="Nguyen C."/>
            <person name="Du F."/>
            <person name="Courtney L."/>
            <person name="Kalicki J."/>
            <person name="Ozersky P."/>
            <person name="Abbott S."/>
            <person name="Armstrong J."/>
            <person name="Belter E.A."/>
            <person name="Caruso L."/>
            <person name="Cedroni M."/>
            <person name="Cotton M."/>
            <person name="Davidson T."/>
            <person name="Desai A."/>
            <person name="Elliott G."/>
            <person name="Erb T."/>
            <person name="Fronick C."/>
            <person name="Gaige T."/>
            <person name="Haakenson W."/>
            <person name="Haglund K."/>
            <person name="Holmes A."/>
            <person name="Harkins R."/>
            <person name="Kim K."/>
            <person name="Kruchowski S.S."/>
            <person name="Strong C.M."/>
            <person name="Grewal N."/>
            <person name="Goyea E."/>
            <person name="Hou S."/>
            <person name="Levy A."/>
            <person name="Martinka S."/>
            <person name="Mead K."/>
            <person name="McLellan M.D."/>
            <person name="Meyer R."/>
            <person name="Randall-Maher J."/>
            <person name="Tomlinson C."/>
            <person name="Dauphin-Kohlberg S."/>
            <person name="Kozlowicz-Reilly A."/>
            <person name="Shah N."/>
            <person name="Swearengen-Shahid S."/>
            <person name="Snider J."/>
            <person name="Strong J.T."/>
            <person name="Thompson J."/>
            <person name="Yoakum M."/>
            <person name="Leonard S."/>
            <person name="Pearman C."/>
            <person name="Trani L."/>
            <person name="Radionenko M."/>
            <person name="Waligorski J.E."/>
            <person name="Wang C."/>
            <person name="Rock S.M."/>
            <person name="Tin-Wollam A.-M."/>
            <person name="Maupin R."/>
            <person name="Latreille P."/>
            <person name="Wendl M.C."/>
            <person name="Yang S.-P."/>
            <person name="Pohl C."/>
            <person name="Wallis J.W."/>
            <person name="Spieth J."/>
            <person name="Bieri T.A."/>
            <person name="Berkowicz N."/>
            <person name="Nelson J.O."/>
            <person name="Osborne J."/>
            <person name="Ding L."/>
            <person name="Meyer R."/>
            <person name="Sabo A."/>
            <person name="Shotland Y."/>
            <person name="Sinha P."/>
            <person name="Wohldmann P.E."/>
            <person name="Cook L.L."/>
            <person name="Hickenbotham M.T."/>
            <person name="Eldred J."/>
            <person name="Williams D."/>
            <person name="Jones T.A."/>
            <person name="She X."/>
            <person name="Ciccarelli F.D."/>
            <person name="Izaurralde E."/>
            <person name="Taylor J."/>
            <person name="Schmutz J."/>
            <person name="Myers R.M."/>
            <person name="Cox D.R."/>
            <person name="Huang X."/>
            <person name="McPherson J.D."/>
            <person name="Mardis E.R."/>
            <person name="Clifton S.W."/>
            <person name="Warren W.C."/>
            <person name="Chinwalla A.T."/>
            <person name="Eddy S.R."/>
            <person name="Marra M.A."/>
            <person name="Ovcharenko I."/>
            <person name="Furey T.S."/>
            <person name="Miller W."/>
            <person name="Eichler E.E."/>
            <person name="Bork P."/>
            <person name="Suyama M."/>
            <person name="Torrents D."/>
            <person name="Waterston R.H."/>
            <person name="Wilson R.K."/>
        </authorList>
    </citation>
    <scope>NUCLEOTIDE SEQUENCE [LARGE SCALE GENOMIC DNA]</scope>
</reference>
<reference key="6">
    <citation type="submission" date="2005-09" db="EMBL/GenBank/DDBJ databases">
        <authorList>
            <person name="Mural R.J."/>
            <person name="Istrail S."/>
            <person name="Sutton G.G."/>
            <person name="Florea L."/>
            <person name="Halpern A.L."/>
            <person name="Mobarry C.M."/>
            <person name="Lippert R."/>
            <person name="Walenz B."/>
            <person name="Shatkay H."/>
            <person name="Dew I."/>
            <person name="Miller J.R."/>
            <person name="Flanigan M.J."/>
            <person name="Edwards N.J."/>
            <person name="Bolanos R."/>
            <person name="Fasulo D."/>
            <person name="Halldorsson B.V."/>
            <person name="Hannenhalli S."/>
            <person name="Turner R."/>
            <person name="Yooseph S."/>
            <person name="Lu F."/>
            <person name="Nusskern D.R."/>
            <person name="Shue B.C."/>
            <person name="Zheng X.H."/>
            <person name="Zhong F."/>
            <person name="Delcher A.L."/>
            <person name="Huson D.H."/>
            <person name="Kravitz S.A."/>
            <person name="Mouchard L."/>
            <person name="Reinert K."/>
            <person name="Remington K.A."/>
            <person name="Clark A.G."/>
            <person name="Waterman M.S."/>
            <person name="Eichler E.E."/>
            <person name="Adams M.D."/>
            <person name="Hunkapiller M.W."/>
            <person name="Myers E.W."/>
            <person name="Venter J.C."/>
        </authorList>
    </citation>
    <scope>NUCLEOTIDE SEQUENCE [LARGE SCALE GENOMIC DNA]</scope>
</reference>
<reference key="7">
    <citation type="journal article" date="2004" name="Genome Res.">
        <title>The status, quality, and expansion of the NIH full-length cDNA project: the Mammalian Gene Collection (MGC).</title>
        <authorList>
            <consortium name="The MGC Project Team"/>
        </authorList>
    </citation>
    <scope>NUCLEOTIDE SEQUENCE [LARGE SCALE MRNA] (ISOFORM 1)</scope>
    <source>
        <tissue>Uterus</tissue>
    </source>
</reference>
<reference key="8">
    <citation type="journal article" date="2002" name="Genes Dev.">
        <title>A novel zinc finger protein is associated with U7 snRNP and interacts with the stem-loop binding protein in the histone pre-mRNP to stimulate 3'-end processing.</title>
        <authorList>
            <person name="Dominski Z."/>
            <person name="Erkmann J.A."/>
            <person name="Yang X."/>
            <person name="Sanchez R."/>
            <person name="Marzluff W.F."/>
        </authorList>
    </citation>
    <scope>MUTAGENESIS OF 230-ASP--SER-270</scope>
    <scope>INTERACTION WITH ZNF473</scope>
</reference>
<reference key="9">
    <citation type="journal article" date="2003" name="Mol. Cell. Biol.">
        <title>Phosphorylation of stem-loop binding protein (SLBP) on two threonines triggers degradation of SLBP, the sole cell cycle-regulated factor required for regulation of histone mRNA processing, at the end of S phase.</title>
        <authorList>
            <person name="Zheng L."/>
            <person name="Dominski Z."/>
            <person name="Yang X.-C."/>
            <person name="Elms P."/>
            <person name="Raska C.S."/>
            <person name="Borchers C.H."/>
            <person name="Marzluff W.F."/>
        </authorList>
    </citation>
    <scope>FUNCTION</scope>
    <scope>ASSOCIATION WITH POLYRIBOSOMES</scope>
    <scope>SUBCELLULAR LOCATION</scope>
    <scope>PHOSPHORYLATION AT THR-61 AND THR-62</scope>
    <scope>RNA-BINDING</scope>
    <scope>MUTAGENESIS OF SER-59; THR-61; THR-62; PRO-63 AND 96-LYS--LEU-99</scope>
    <scope>IDENTIFICATION BY MASS SPECTROMETRY</scope>
</reference>
<reference key="10">
    <citation type="journal article" date="2005" name="Mol. Biol. Cell">
        <title>Nuclear import of the stem-loop binding protein and localization during the cell cycle.</title>
        <authorList>
            <person name="Erkmann J.A."/>
            <person name="Wagner E.J."/>
            <person name="Dong J."/>
            <person name="Zhang Y."/>
            <person name="Kutay U."/>
            <person name="Marzluff W.F."/>
        </authorList>
    </citation>
    <scope>INTERACTION WITH TNPO3 AND THE IMPORTIN ALPHA/IMPORTIN BETA RECEPTOR</scope>
    <scope>SUBCELLULAR LOCATION</scope>
    <scope>MUTAGENESIS OF 31-ARG--ARG-34; 96-LYS--LYS-99; ARG-137; ARG-138 AND 241-LYS--HIS-244</scope>
</reference>
<reference key="11">
    <citation type="journal article" date="2005" name="Nat. Struct. Mol. Biol.">
        <title>Regulated degradation of replication-dependent histone mRNAs requires both ATR and Upf1.</title>
        <authorList>
            <person name="Kaygun H."/>
            <person name="Marzluff W.F."/>
        </authorList>
    </citation>
    <scope>INTERACTION WITH UPF1</scope>
</reference>
<reference key="12">
    <citation type="journal article" date="2006" name="Cell">
        <title>Global, in vivo, and site-specific phosphorylation dynamics in signaling networks.</title>
        <authorList>
            <person name="Olsen J.V."/>
            <person name="Blagoev B."/>
            <person name="Gnad F."/>
            <person name="Macek B."/>
            <person name="Kumar C."/>
            <person name="Mortensen P."/>
            <person name="Mann M."/>
        </authorList>
    </citation>
    <scope>PHOSPHORYLATION [LARGE SCALE ANALYSIS] AT SER-20 AND SER-23</scope>
    <scope>IDENTIFICATION BY MASS SPECTROMETRY [LARGE SCALE ANALYSIS]</scope>
    <source>
        <tissue>Cervix carcinoma</tissue>
    </source>
</reference>
<reference key="13">
    <citation type="journal article" date="2006" name="J. Biol. Chem.">
        <title>Characterization of 3'hExo, a 3' exonuclease specifically interacting with the 3' end of histone mRNA.</title>
        <authorList>
            <person name="Yang X.-C."/>
            <person name="Purdy M."/>
            <person name="Marzluff W.F."/>
            <person name="Dominski Z."/>
        </authorList>
    </citation>
    <scope>IDENTIFICATION IN A TERNARY COMPLEX</scope>
    <scope>RNA-BINDING</scope>
</reference>
<reference key="14">
    <citation type="journal article" date="2008" name="Genes Dev.">
        <title>Degradation of histone mRNA requires oligouridylation followed by decapping and simultaneous degradation of the mRNA both 5' to 3' and 3' to 5'.</title>
        <authorList>
            <person name="Mullen T.E."/>
            <person name="Marzluff W.F."/>
        </authorList>
    </citation>
    <scope>INTERACTION WITH LSM1</scope>
</reference>
<reference key="15">
    <citation type="journal article" date="2008" name="Mol. Cell. Biol.">
        <title>SLIP1, a factor required for activation of histone mRNA translation by the stem-loop binding protein.</title>
        <authorList>
            <person name="Cakmakci N.G."/>
            <person name="Lerner R.S."/>
            <person name="Wagner E.J."/>
            <person name="Zheng L."/>
            <person name="Marzluff W.F."/>
        </authorList>
    </citation>
    <scope>INTERACTION WITH MIF4GD</scope>
</reference>
<reference key="16">
    <citation type="journal article" date="2008" name="Mol. Cell. Biol.">
        <title>Phosphorylation of threonine 61 by cyclin a/Cdk1 triggers degradation of stem-loop binding protein at the end of S phase.</title>
        <authorList>
            <person name="Koseoglu M.M."/>
            <person name="Graves L.M."/>
            <person name="Marzluff W.F."/>
        </authorList>
    </citation>
    <scope>PHOSPHORYLATION AT THR-61 AND THR-62</scope>
    <scope>MUTAGENESIS OF THR-61; THR-62; 59-SER--PRO-63 AND 96-LYS--LEU-99</scope>
    <scope>IDENTIFICATION BY MASS SPECTROMETRY</scope>
</reference>
<reference key="17">
    <citation type="journal article" date="2008" name="Proc. Natl. Acad. Sci. U.S.A.">
        <title>A quantitative atlas of mitotic phosphorylation.</title>
        <authorList>
            <person name="Dephoure N."/>
            <person name="Zhou C."/>
            <person name="Villen J."/>
            <person name="Beausoleil S.A."/>
            <person name="Bakalarski C.E."/>
            <person name="Elledge S.J."/>
            <person name="Gygi S.P."/>
        </authorList>
    </citation>
    <scope>IDENTIFICATION BY MASS SPECTROMETRY [LARGE SCALE ANALYSIS]</scope>
    <source>
        <tissue>Cervix carcinoma</tissue>
    </source>
</reference>
<reference key="18">
    <citation type="journal article" date="2009" name="Anal. Chem.">
        <title>Lys-N and trypsin cover complementary parts of the phosphoproteome in a refined SCX-based approach.</title>
        <authorList>
            <person name="Gauci S."/>
            <person name="Helbig A.O."/>
            <person name="Slijper M."/>
            <person name="Krijgsveld J."/>
            <person name="Heck A.J."/>
            <person name="Mohammed S."/>
        </authorList>
    </citation>
    <scope>IDENTIFICATION BY MASS SPECTROMETRY [LARGE SCALE ANALYSIS]</scope>
</reference>
<reference key="19">
    <citation type="journal article" date="2009" name="RNA">
        <title>Knockdown of SLBP results in nuclear retention of histone mRNA.</title>
        <authorList>
            <person name="Sullivan K.D."/>
            <person name="Mullen T.E."/>
            <person name="Marzluff W.F."/>
            <person name="Wagner E.J."/>
        </authorList>
    </citation>
    <scope>FUNCTION IN HISTONE MRNA EXPORT</scope>
</reference>
<reference key="20">
    <citation type="journal article" date="2009" name="Sci. Signal.">
        <title>Quantitative phosphoproteomic analysis of T cell receptor signaling reveals system-wide modulation of protein-protein interactions.</title>
        <authorList>
            <person name="Mayya V."/>
            <person name="Lundgren D.H."/>
            <person name="Hwang S.-I."/>
            <person name="Rezaul K."/>
            <person name="Wu L."/>
            <person name="Eng J.K."/>
            <person name="Rodionov V."/>
            <person name="Han D.K."/>
        </authorList>
    </citation>
    <scope>IDENTIFICATION BY MASS SPECTROMETRY [LARGE SCALE ANALYSIS]</scope>
    <source>
        <tissue>Leukemic T-cell</tissue>
    </source>
</reference>
<reference key="21">
    <citation type="journal article" date="2011" name="BMC Syst. Biol.">
        <title>Initial characterization of the human central proteome.</title>
        <authorList>
            <person name="Burkard T.R."/>
            <person name="Planyavsky M."/>
            <person name="Kaupe I."/>
            <person name="Breitwieser F.P."/>
            <person name="Buerckstuemmer T."/>
            <person name="Bennett K.L."/>
            <person name="Superti-Furga G."/>
            <person name="Colinge J."/>
        </authorList>
    </citation>
    <scope>IDENTIFICATION BY MASS SPECTROMETRY [LARGE SCALE ANALYSIS]</scope>
</reference>
<reference key="22">
    <citation type="journal article" date="2011" name="Sci. Signal.">
        <title>System-wide temporal characterization of the proteome and phosphoproteome of human embryonic stem cell differentiation.</title>
        <authorList>
            <person name="Rigbolt K.T."/>
            <person name="Prokhorova T.A."/>
            <person name="Akimov V."/>
            <person name="Henningsen J."/>
            <person name="Johansen P.T."/>
            <person name="Kratchmarova I."/>
            <person name="Kassem M."/>
            <person name="Mann M."/>
            <person name="Olsen J.V."/>
            <person name="Blagoev B."/>
        </authorList>
    </citation>
    <scope>PHOSPHORYLATION [LARGE SCALE ANALYSIS] AT SER-182</scope>
    <scope>IDENTIFICATION BY MASS SPECTROMETRY [LARGE SCALE ANALYSIS]</scope>
</reference>
<reference key="23">
    <citation type="journal article" date="2013" name="J. Proteome Res.">
        <title>Toward a comprehensive characterization of a human cancer cell phosphoproteome.</title>
        <authorList>
            <person name="Zhou H."/>
            <person name="Di Palma S."/>
            <person name="Preisinger C."/>
            <person name="Peng M."/>
            <person name="Polat A.N."/>
            <person name="Heck A.J."/>
            <person name="Mohammed S."/>
        </authorList>
    </citation>
    <scope>PHOSPHORYLATION [LARGE SCALE ANALYSIS] AT SER-20; SER-23; SER-59; THR-62 AND THR-171</scope>
    <scope>IDENTIFICATION BY MASS SPECTROMETRY [LARGE SCALE ANALYSIS]</scope>
    <source>
        <tissue>Cervix carcinoma</tissue>
        <tissue>Erythroleukemia</tissue>
    </source>
</reference>
<reference key="24">
    <citation type="journal article" date="2017" name="Cell Cycle">
        <title>FEM1 proteins are ancient regulators of SLBP degradation.</title>
        <authorList>
            <person name="Dankert J.F."/>
            <person name="Pagan J.K."/>
            <person name="Starostina N.G."/>
            <person name="Kipreos E.T."/>
            <person name="Pagano M."/>
        </authorList>
    </citation>
    <scope>UBIQUITINATION</scope>
</reference>
<reference key="25">
    <citation type="journal article" date="2017" name="Nat. Struct. Mol. Biol.">
        <title>Site-specific mapping of the human SUMO proteome reveals co-modification with phosphorylation.</title>
        <authorList>
            <person name="Hendriks I.A."/>
            <person name="Lyon D."/>
            <person name="Young C."/>
            <person name="Jensen L.J."/>
            <person name="Vertegaal A.C."/>
            <person name="Nielsen M.L."/>
        </authorList>
    </citation>
    <scope>SUMOYLATION [LARGE SCALE ANALYSIS] AT LYS-98</scope>
    <scope>IDENTIFICATION BY MASS SPECTROMETRY [LARGE SCALE ANALYSIS]</scope>
</reference>
<reference key="26">
    <citation type="journal article" date="2012" name="Biochemistry">
        <title>Interaction of the histone mRNA hairpin with stem-loop binding protein (SLBP) and regulation of the SLBP-RNA complex by phosphorylation and proline isomerization.</title>
        <authorList>
            <person name="Zhang M."/>
            <person name="Lam T.T."/>
            <person name="Tonelli M."/>
            <person name="Marzluff W.F."/>
            <person name="Thapar R."/>
        </authorList>
    </citation>
    <scope>STRUCTURE BY NMR OF 129-158</scope>
    <scope>PHOSPHORYLATION AT THR-171</scope>
</reference>
<feature type="chain" id="PRO_0000100356" description="Histone RNA hairpin-binding protein">
    <location>
        <begin position="1"/>
        <end position="270"/>
    </location>
</feature>
<feature type="region of interest" description="Disordered" evidence="2">
    <location>
        <begin position="1"/>
        <end position="132"/>
    </location>
</feature>
<feature type="region of interest" description="RNA-binding" evidence="14">
    <location>
        <begin position="129"/>
        <end position="198"/>
    </location>
</feature>
<feature type="region of interest" description="Disordered" evidence="2">
    <location>
        <begin position="215"/>
        <end position="241"/>
    </location>
</feature>
<feature type="short sequence motif" description="Nuclear localization signal NLS1" evidence="5">
    <location>
        <begin position="31"/>
        <end position="34"/>
    </location>
</feature>
<feature type="short sequence motif" description="Nuclear localization signal NLS2" evidence="5">
    <location>
        <begin position="96"/>
        <end position="99"/>
    </location>
</feature>
<feature type="compositionally biased region" description="Basic and acidic residues" evidence="2">
    <location>
        <begin position="37"/>
        <end position="58"/>
    </location>
</feature>
<feature type="compositionally biased region" description="Basic and acidic residues" evidence="2">
    <location>
        <begin position="84"/>
        <end position="94"/>
    </location>
</feature>
<feature type="compositionally biased region" description="Low complexity" evidence="2">
    <location>
        <begin position="218"/>
        <end position="228"/>
    </location>
</feature>
<feature type="modified residue" description="Phosphoserine" evidence="18 20">
    <location>
        <position position="20"/>
    </location>
</feature>
<feature type="modified residue" description="Phosphoserine" evidence="18 20">
    <location>
        <position position="23"/>
    </location>
</feature>
<feature type="modified residue" description="Phosphoserine" evidence="20">
    <location>
        <position position="59"/>
    </location>
</feature>
<feature type="modified residue" description="Phosphothreonine; by CK2" evidence="4 10">
    <location>
        <position position="61"/>
    </location>
</feature>
<feature type="modified residue" description="Phosphothreonine; by CDK1" evidence="4 10 20">
    <location>
        <position position="62"/>
    </location>
</feature>
<feature type="modified residue" description="Phosphothreonine" evidence="12 20">
    <location>
        <position position="171"/>
    </location>
</feature>
<feature type="modified residue" description="Phosphoserine" evidence="19">
    <location>
        <position position="182"/>
    </location>
</feature>
<feature type="cross-link" description="Glycyl lysine isopeptide (Lys-Gly) (interchain with G-Cter in SUMO2)" evidence="21">
    <location>
        <position position="98"/>
    </location>
</feature>
<feature type="splice variant" id="VSP_042164" description="In isoform 2." evidence="16">
    <location>
        <begin position="20"/>
        <end position="58"/>
    </location>
</feature>
<feature type="mutagenesis site" description="Reduces interaction with the importin alpha/importin beta receptor. Abolishes interaction with the importin alpha/importin beta receptor; when associated with A-96; A-97; A-98 and A-99 or with A-241; A-242; A-243 and A-244." evidence="5">
    <original>RKRR</original>
    <variation>AAAA</variation>
    <location>
        <begin position="31"/>
        <end position="34"/>
    </location>
</feature>
<feature type="mutagenesis site" description="Does not increase its stability at the end of the S phase and through G2 and mitosis." evidence="10">
    <original>SFTTP</original>
    <variation>AAAA</variation>
    <location>
        <begin position="59"/>
        <end position="63"/>
    </location>
</feature>
<feature type="mutagenesis site" description="Does not increase its stability at the end of the S phase and through G2 and mitosis." evidence="4">
    <original>S</original>
    <variation>A</variation>
    <location>
        <position position="59"/>
    </location>
</feature>
<feature type="mutagenesis site" description="Increases its stability at the end of the S phase and through G2 and mitosis. Active in histone pre-mRNA processing during the G2 phase." evidence="4 10">
    <original>T</original>
    <variation>A</variation>
    <location>
        <position position="61"/>
    </location>
</feature>
<feature type="mutagenesis site" description="Increases its stability at the end of the S phase and through G2 and mitosis." evidence="4 10">
    <original>T</original>
    <variation>A</variation>
    <location>
        <position position="62"/>
    </location>
</feature>
<feature type="mutagenesis site" description="Increases its stability at the end of the S phase and through G2 and mitosis." evidence="4">
    <original>P</original>
    <variation>A</variation>
    <location>
        <position position="63"/>
    </location>
</feature>
<feature type="mutagenesis site" description="Increases its stability at the end of the S phase and through G2 and mitosis. Inhibits phosphorylation of T-62. Localizes in the nucleus. Reduces interaction with the importin alpha/importin beta receptor. Abolishes interaction with the importin alpha/importin beta receptor; when associated with A-31; A-32; A-33 and A-34 or with A-241; A-242; A-243 and A-244." evidence="4 5 10">
    <original>KRKL</original>
    <variation>AAAA</variation>
    <location>
        <begin position="96"/>
        <end position="99"/>
    </location>
</feature>
<feature type="mutagenesis site" description="Inhibits histone RNA-binding and localization to the cytoplasm." evidence="5">
    <original>R</original>
    <variation>A</variation>
    <location>
        <position position="137"/>
    </location>
</feature>
<feature type="mutagenesis site" description="Inhibits histone RNA-binding and localization to the cytoplasm." evidence="5">
    <original>R</original>
    <variation>A</variation>
    <location>
        <position position="138"/>
    </location>
</feature>
<feature type="mutagenesis site" description="Decrease in 3'-end processing efficiency." evidence="3">
    <location>
        <begin position="230"/>
        <end position="270"/>
    </location>
</feature>
<feature type="mutagenesis site" description="Reduces interaction with the importin alpha/importin beta receptor. Abolishes interaction with the importin alpha/importin beta receptor; when associated with A-31; A-32; A-33 and A-34 or with A-96; A-97; A-98 and A-99." evidence="5">
    <original>KVRH</original>
    <variation>AAAA</variation>
    <location>
        <begin position="241"/>
        <end position="244"/>
    </location>
</feature>
<feature type="helix" evidence="22">
    <location>
        <begin position="132"/>
        <end position="146"/>
    </location>
</feature>
<feature type="helix" evidence="22">
    <location>
        <begin position="149"/>
        <end position="157"/>
    </location>
</feature>
<feature type="turn" evidence="22">
    <location>
        <begin position="165"/>
        <end position="167"/>
    </location>
</feature>
<feature type="helix" evidence="22">
    <location>
        <begin position="180"/>
        <end position="194"/>
    </location>
</feature>
<feature type="helix" evidence="22">
    <location>
        <begin position="195"/>
        <end position="197"/>
    </location>
</feature>
<gene>
    <name type="primary">SLBP</name>
    <name type="synonym">HBP</name>
</gene>
<name>SLBP_HUMAN</name>
<accession>Q14493</accession>
<accession>B3KRJ5</accession>
<evidence type="ECO:0000250" key="1">
    <source>
        <dbReference type="UniProtKB" id="P97440"/>
    </source>
</evidence>
<evidence type="ECO:0000256" key="2">
    <source>
        <dbReference type="SAM" id="MobiDB-lite"/>
    </source>
</evidence>
<evidence type="ECO:0000269" key="3">
    <source>
    </source>
</evidence>
<evidence type="ECO:0000269" key="4">
    <source>
    </source>
</evidence>
<evidence type="ECO:0000269" key="5">
    <source>
    </source>
</evidence>
<evidence type="ECO:0000269" key="6">
    <source>
    </source>
</evidence>
<evidence type="ECO:0000269" key="7">
    <source>
    </source>
</evidence>
<evidence type="ECO:0000269" key="8">
    <source>
    </source>
</evidence>
<evidence type="ECO:0000269" key="9">
    <source>
    </source>
</evidence>
<evidence type="ECO:0000269" key="10">
    <source>
    </source>
</evidence>
<evidence type="ECO:0000269" key="11">
    <source>
    </source>
</evidence>
<evidence type="ECO:0000269" key="12">
    <source>
    </source>
</evidence>
<evidence type="ECO:0000269" key="13">
    <source>
    </source>
</evidence>
<evidence type="ECO:0000269" key="14">
    <source>
    </source>
</evidence>
<evidence type="ECO:0000269" key="15">
    <source>
    </source>
</evidence>
<evidence type="ECO:0000303" key="16">
    <source>
    </source>
</evidence>
<evidence type="ECO:0000305" key="17"/>
<evidence type="ECO:0007744" key="18">
    <source>
    </source>
</evidence>
<evidence type="ECO:0007744" key="19">
    <source>
    </source>
</evidence>
<evidence type="ECO:0007744" key="20">
    <source>
    </source>
</evidence>
<evidence type="ECO:0007744" key="21">
    <source>
    </source>
</evidence>
<evidence type="ECO:0007829" key="22">
    <source>
        <dbReference type="PDB" id="4QOZ"/>
    </source>
</evidence>
<sequence>MACRPRSPPRHQSRCDGDASPPSPARWSLGRKRRADGRRWRPEDAEEAEHRGAERRPESFTTPEGPKPRSRCSDWASAVEEDEMRTRVNKEMARYKRKLLINDFGRERKSSSGSSDSKESMSTVPADFETDESVLMRRQKQINYGKNTIAYDRYIKEVPRHLRQPGIHPKTPNKFKKYSRRSWDQQIKLWKVALHFWDPPAEEGCDLQEIHPVDLESAESSSEPQTSSQDDFDVYSGTPTKVRHMDSQVEDEFDLEACLTEPLRDFSAMS</sequence>
<dbReference type="EMBL" id="M63544">
    <property type="status" value="NOT_ANNOTATED_CDS"/>
    <property type="molecule type" value="Genomic_DNA"/>
</dbReference>
<dbReference type="EMBL" id="U75679">
    <property type="protein sequence ID" value="AAB97091.1"/>
    <property type="molecule type" value="mRNA"/>
</dbReference>
<dbReference type="EMBL" id="Z71188">
    <property type="protein sequence ID" value="CAA94918.1"/>
    <property type="molecule type" value="mRNA"/>
</dbReference>
<dbReference type="EMBL" id="AK091735">
    <property type="protein sequence ID" value="BAG52407.1"/>
    <property type="molecule type" value="mRNA"/>
</dbReference>
<dbReference type="EMBL" id="AC016773">
    <property type="status" value="NOT_ANNOTATED_CDS"/>
    <property type="molecule type" value="Genomic_DNA"/>
</dbReference>
<dbReference type="EMBL" id="CH471131">
    <property type="protein sequence ID" value="EAW82579.1"/>
    <property type="molecule type" value="Genomic_DNA"/>
</dbReference>
<dbReference type="EMBL" id="BC014908">
    <property type="protein sequence ID" value="AAH14908.1"/>
    <property type="molecule type" value="mRNA"/>
</dbReference>
<dbReference type="EMBL" id="BC015703">
    <property type="protein sequence ID" value="AAH15703.1"/>
    <property type="molecule type" value="mRNA"/>
</dbReference>
<dbReference type="CCDS" id="CCDS3350.1">
    <molecule id="Q14493-1"/>
</dbReference>
<dbReference type="CCDS" id="CCDS82903.1">
    <molecule id="Q14493-2"/>
</dbReference>
<dbReference type="RefSeq" id="NP_001293003.1">
    <property type="nucleotide sequence ID" value="NM_001306074.1"/>
</dbReference>
<dbReference type="RefSeq" id="NP_001293004.1">
    <molecule id="Q14493-2"/>
    <property type="nucleotide sequence ID" value="NM_001306075.2"/>
</dbReference>
<dbReference type="RefSeq" id="NP_006518.1">
    <molecule id="Q14493-1"/>
    <property type="nucleotide sequence ID" value="NM_006527.4"/>
</dbReference>
<dbReference type="PDB" id="2KJM">
    <property type="method" value="NMR"/>
    <property type="chains" value="A=129-158"/>
</dbReference>
<dbReference type="PDB" id="4L8R">
    <property type="method" value="X-ray"/>
    <property type="resolution" value="2.60 A"/>
    <property type="chains" value="C=125-223"/>
</dbReference>
<dbReference type="PDB" id="4QOZ">
    <property type="method" value="X-ray"/>
    <property type="resolution" value="2.30 A"/>
    <property type="chains" value="C=125-223"/>
</dbReference>
<dbReference type="PDBsum" id="2KJM"/>
<dbReference type="PDBsum" id="4L8R"/>
<dbReference type="PDBsum" id="4QOZ"/>
<dbReference type="BMRB" id="Q14493"/>
<dbReference type="SMR" id="Q14493"/>
<dbReference type="BioGRID" id="113627">
    <property type="interactions" value="76"/>
</dbReference>
<dbReference type="ComplexPortal" id="CPX-1313">
    <property type="entry name" value="SLBP-SLIP1 complex"/>
</dbReference>
<dbReference type="DIP" id="DIP-57045N"/>
<dbReference type="FunCoup" id="Q14493">
    <property type="interactions" value="3502"/>
</dbReference>
<dbReference type="IntAct" id="Q14493">
    <property type="interactions" value="28"/>
</dbReference>
<dbReference type="MINT" id="Q14493"/>
<dbReference type="STRING" id="9606.ENSP00000417686"/>
<dbReference type="GlyGen" id="Q14493">
    <property type="glycosylation" value="1 site, 1 O-linked glycan (1 site)"/>
</dbReference>
<dbReference type="iPTMnet" id="Q14493"/>
<dbReference type="PhosphoSitePlus" id="Q14493"/>
<dbReference type="BioMuta" id="SLBP"/>
<dbReference type="DMDM" id="9789785"/>
<dbReference type="jPOST" id="Q14493"/>
<dbReference type="MassIVE" id="Q14493"/>
<dbReference type="PaxDb" id="9606-ENSP00000417686"/>
<dbReference type="PeptideAtlas" id="Q14493"/>
<dbReference type="ProteomicsDB" id="60001">
    <molecule id="Q14493-1"/>
</dbReference>
<dbReference type="ProteomicsDB" id="60002">
    <molecule id="Q14493-2"/>
</dbReference>
<dbReference type="Pumba" id="Q14493"/>
<dbReference type="Antibodypedia" id="8450">
    <property type="antibodies" value="84 antibodies from 24 providers"/>
</dbReference>
<dbReference type="DNASU" id="7884"/>
<dbReference type="Ensembl" id="ENST00000429429.6">
    <molecule id="Q14493-2"/>
    <property type="protein sequence ID" value="ENSP00000406322.2"/>
    <property type="gene ID" value="ENSG00000163950.13"/>
</dbReference>
<dbReference type="Ensembl" id="ENST00000489418.6">
    <molecule id="Q14493-1"/>
    <property type="protein sequence ID" value="ENSP00000417686.1"/>
    <property type="gene ID" value="ENSG00000163950.13"/>
</dbReference>
<dbReference type="GeneID" id="7884"/>
<dbReference type="KEGG" id="hsa:7884"/>
<dbReference type="MANE-Select" id="ENST00000489418.6">
    <property type="protein sequence ID" value="ENSP00000417686.1"/>
    <property type="RefSeq nucleotide sequence ID" value="NM_006527.4"/>
    <property type="RefSeq protein sequence ID" value="NP_006518.1"/>
</dbReference>
<dbReference type="UCSC" id="uc003gdk.2">
    <molecule id="Q14493-1"/>
    <property type="organism name" value="human"/>
</dbReference>
<dbReference type="AGR" id="HGNC:10904"/>
<dbReference type="CTD" id="7884"/>
<dbReference type="DisGeNET" id="7884"/>
<dbReference type="GeneCards" id="SLBP"/>
<dbReference type="HGNC" id="HGNC:10904">
    <property type="gene designation" value="SLBP"/>
</dbReference>
<dbReference type="HPA" id="ENSG00000163950">
    <property type="expression patterns" value="Low tissue specificity"/>
</dbReference>
<dbReference type="MIM" id="602422">
    <property type="type" value="gene"/>
</dbReference>
<dbReference type="neXtProt" id="NX_Q14493"/>
<dbReference type="OpenTargets" id="ENSG00000163950"/>
<dbReference type="PharmGKB" id="PA35804"/>
<dbReference type="VEuPathDB" id="HostDB:ENSG00000163950"/>
<dbReference type="eggNOG" id="KOG3934">
    <property type="taxonomic scope" value="Eukaryota"/>
</dbReference>
<dbReference type="GeneTree" id="ENSGT00390000008738"/>
<dbReference type="HOGENOM" id="CLU_093199_1_0_1"/>
<dbReference type="InParanoid" id="Q14493"/>
<dbReference type="OrthoDB" id="265795at2759"/>
<dbReference type="PAN-GO" id="Q14493">
    <property type="GO annotations" value="6 GO annotations based on evolutionary models"/>
</dbReference>
<dbReference type="PhylomeDB" id="Q14493"/>
<dbReference type="TreeFam" id="TF316521"/>
<dbReference type="PathwayCommons" id="Q14493"/>
<dbReference type="Reactome" id="R-HSA-159230">
    <property type="pathway name" value="Transport of the SLBP Dependant Mature mRNA"/>
</dbReference>
<dbReference type="Reactome" id="R-HSA-73856">
    <property type="pathway name" value="RNA Polymerase II Transcription Termination"/>
</dbReference>
<dbReference type="Reactome" id="R-HSA-77588">
    <property type="pathway name" value="SLBP Dependent Processing of Replication-Dependent Histone Pre-mRNAs"/>
</dbReference>
<dbReference type="SignaLink" id="Q14493"/>
<dbReference type="SIGNOR" id="Q14493"/>
<dbReference type="BioGRID-ORCS" id="7884">
    <property type="hits" value="393 hits in 1160 CRISPR screens"/>
</dbReference>
<dbReference type="CD-CODE" id="DEE660B4">
    <property type="entry name" value="Stress granule"/>
</dbReference>
<dbReference type="ChiTaRS" id="SLBP">
    <property type="organism name" value="human"/>
</dbReference>
<dbReference type="EvolutionaryTrace" id="Q14493"/>
<dbReference type="GeneWiki" id="SLBP"/>
<dbReference type="GenomeRNAi" id="7884"/>
<dbReference type="Pharos" id="Q14493">
    <property type="development level" value="Tbio"/>
</dbReference>
<dbReference type="PRO" id="PR:Q14493"/>
<dbReference type="Proteomes" id="UP000005640">
    <property type="component" value="Chromosome 4"/>
</dbReference>
<dbReference type="RNAct" id="Q14493">
    <property type="molecule type" value="protein"/>
</dbReference>
<dbReference type="Bgee" id="ENSG00000163950">
    <property type="expression patterns" value="Expressed in oocyte and 209 other cell types or tissues"/>
</dbReference>
<dbReference type="ExpressionAtlas" id="Q14493">
    <property type="expression patterns" value="baseline and differential"/>
</dbReference>
<dbReference type="GO" id="GO:0005737">
    <property type="term" value="C:cytoplasm"/>
    <property type="evidence" value="ECO:0000314"/>
    <property type="project" value="UniProtKB"/>
</dbReference>
<dbReference type="GO" id="GO:0005829">
    <property type="term" value="C:cytosol"/>
    <property type="evidence" value="ECO:0000314"/>
    <property type="project" value="HPA"/>
</dbReference>
<dbReference type="GO" id="GO:0062073">
    <property type="term" value="C:histone mRNA stem-loop binding complex"/>
    <property type="evidence" value="ECO:0000353"/>
    <property type="project" value="ComplexPortal"/>
</dbReference>
<dbReference type="GO" id="GO:0071204">
    <property type="term" value="C:histone pre-mRNA 3'end processing complex"/>
    <property type="evidence" value="ECO:0000250"/>
    <property type="project" value="UniProtKB"/>
</dbReference>
<dbReference type="GO" id="GO:0005730">
    <property type="term" value="C:nucleolus"/>
    <property type="evidence" value="ECO:0000314"/>
    <property type="project" value="HPA"/>
</dbReference>
<dbReference type="GO" id="GO:0005654">
    <property type="term" value="C:nucleoplasm"/>
    <property type="evidence" value="ECO:0000314"/>
    <property type="project" value="HPA"/>
</dbReference>
<dbReference type="GO" id="GO:0005634">
    <property type="term" value="C:nucleus"/>
    <property type="evidence" value="ECO:0000314"/>
    <property type="project" value="UniProtKB"/>
</dbReference>
<dbReference type="GO" id="GO:1990904">
    <property type="term" value="C:ribonucleoprotein complex"/>
    <property type="evidence" value="ECO:0000304"/>
    <property type="project" value="ProtInc"/>
</dbReference>
<dbReference type="GO" id="GO:0071208">
    <property type="term" value="F:histone pre-mRNA DCP binding"/>
    <property type="evidence" value="ECO:0000250"/>
    <property type="project" value="UniProtKB"/>
</dbReference>
<dbReference type="GO" id="GO:0071207">
    <property type="term" value="F:histone pre-mRNA stem-loop binding"/>
    <property type="evidence" value="ECO:0000250"/>
    <property type="project" value="UniProtKB"/>
</dbReference>
<dbReference type="GO" id="GO:0042802">
    <property type="term" value="F:identical protein binding"/>
    <property type="evidence" value="ECO:0000353"/>
    <property type="project" value="IntAct"/>
</dbReference>
<dbReference type="GO" id="GO:0003729">
    <property type="term" value="F:mRNA binding"/>
    <property type="evidence" value="ECO:0000314"/>
    <property type="project" value="UniProtKB"/>
</dbReference>
<dbReference type="GO" id="GO:0003723">
    <property type="term" value="F:RNA binding"/>
    <property type="evidence" value="ECO:0007005"/>
    <property type="project" value="UniProtKB"/>
</dbReference>
<dbReference type="GO" id="GO:0002191">
    <property type="term" value="P:cap-dependent translational initiation"/>
    <property type="evidence" value="ECO:0000314"/>
    <property type="project" value="ComplexPortal"/>
</dbReference>
<dbReference type="GO" id="GO:0006398">
    <property type="term" value="P:mRNA 3'-end processing by stem-loop binding and cleavage"/>
    <property type="evidence" value="ECO:0000250"/>
    <property type="project" value="UniProtKB"/>
</dbReference>
<dbReference type="GO" id="GO:0051028">
    <property type="term" value="P:mRNA transport"/>
    <property type="evidence" value="ECO:0000314"/>
    <property type="project" value="UniProtKB"/>
</dbReference>
<dbReference type="DisProt" id="DP01987"/>
<dbReference type="FunFam" id="1.10.8.1120:FF:000001">
    <property type="entry name" value="Histone RNA hairpin-binding protein-like"/>
    <property type="match status" value="1"/>
</dbReference>
<dbReference type="Gene3D" id="1.10.8.1120">
    <property type="entry name" value="Histone RNA hairpin-binding protein RNA-binding domain"/>
    <property type="match status" value="1"/>
</dbReference>
<dbReference type="InterPro" id="IPR026502">
    <property type="entry name" value="SLBP1/SLBP2"/>
</dbReference>
<dbReference type="InterPro" id="IPR029344">
    <property type="entry name" value="SLBP_RNA_bind"/>
</dbReference>
<dbReference type="InterPro" id="IPR038294">
    <property type="entry name" value="SLBP_RNA_bind_sf"/>
</dbReference>
<dbReference type="PANTHER" id="PTHR17408">
    <property type="entry name" value="HISTONE RNA HAIRPIN-BINDING PROTEIN"/>
    <property type="match status" value="1"/>
</dbReference>
<dbReference type="PANTHER" id="PTHR17408:SF7">
    <property type="entry name" value="HISTONE RNA HAIRPIN-BINDING PROTEIN"/>
    <property type="match status" value="1"/>
</dbReference>
<dbReference type="Pfam" id="PF15247">
    <property type="entry name" value="SLBP_RNA_bind"/>
    <property type="match status" value="1"/>
</dbReference>
<proteinExistence type="evidence at protein level"/>
<protein>
    <recommendedName>
        <fullName>Histone RNA hairpin-binding protein</fullName>
    </recommendedName>
    <alternativeName>
        <fullName>Histone stem-loop-binding protein</fullName>
    </alternativeName>
</protein>
<comment type="function">
    <text evidence="1 4 11 14 15">RNA-binding protein involved in the histone pre-mRNA processing (PubMed:12588979, PubMed:19155325, PubMed:8957003, PubMed:9049306). Binds the stem-loop structure of replication-dependent histone pre-mRNAs and contributes to efficient 3'-end processing by stabilizing the complex between histone pre-mRNA and U7 small nuclear ribonucleoprotein (snRNP), via the histone downstream element (HDE) (PubMed:12588979, PubMed:19155325, PubMed:8957003, PubMed:9049306). Plays an important role in targeting mature histone mRNA from the nucleus to the cytoplasm and to the translation machinery (PubMed:12588979, PubMed:19155325, PubMed:8957003, PubMed:9049306). Stabilizes mature histone mRNA and could be involved in cell-cycle regulation of histone gene expression (PubMed:12588979, PubMed:19155325, PubMed:8957003, PubMed:9049306). Involved in the mechanism by which growing oocytes accumulate histone proteins that support early embryogenesis (By similarity). Binds to the 5' side of the stem-loop structure of histone pre-mRNAs (By similarity).</text>
</comment>
<comment type="subunit">
    <text evidence="1 3 4 5 6 7 8 9 12">Monomer (PubMed:22439849). SLBP/pre-mRNA complex interacts with ZNF473 (PubMed:11782445). Interacts with the Importin alpha/Importin beta receptor, LSM1, MIF4GD, TNPO3 and UPF1 (PubMed:15829567, PubMed:16086026, PubMed:18025107). Interaction with LSM1 occurs when histone mRNA is being rapidly degraded during the S phase (PubMed:18172165). Found in a ternary complex with ERI1 and the stem-loop structure of the 3' end of histone mRNA (PubMed:16912046). Associates with polyribosomes (PubMed:12588979). Identified in a histone pre-mRNA complex, at least composed of ERI1, LSM11, SLBP, SNRPB, SYNCRIP and YBX1 (By similarity). Binds in a cooperative manner with ERI1 to the mature 3'-end of histone mRNAs (By similarity).</text>
</comment>
<comment type="interaction">
    <interactant intactId="EBI-2696402">
        <id>Q14493</id>
    </interactant>
    <interactant intactId="EBI-5459222">
        <id>Q8IV48</id>
        <label>ERI1</label>
    </interactant>
    <organismsDiffer>false</organismsDiffer>
    <experiments>2</experiments>
</comment>
<comment type="interaction">
    <interactant intactId="EBI-2696402">
        <id>Q14493</id>
    </interactant>
    <interactant intactId="EBI-373498">
        <id>A9UHW6</id>
        <label>MIF4GD</label>
    </interactant>
    <organismsDiffer>false</organismsDiffer>
    <experiments>10</experiments>
</comment>
<comment type="interaction">
    <interactant intactId="EBI-2696402">
        <id>Q14493</id>
    </interactant>
    <interactant intactId="EBI-2696402">
        <id>Q14493</id>
        <label>SLBP</label>
    </interactant>
    <organismsDiffer>false</organismsDiffer>
    <experiments>8</experiments>
</comment>
<comment type="interaction">
    <interactant intactId="EBI-2696402">
        <id>Q14493</id>
    </interactant>
    <interactant intactId="EBI-373471">
        <id>Q92900</id>
        <label>UPF1</label>
    </interactant>
    <organismsDiffer>false</organismsDiffer>
    <experiments>3</experiments>
</comment>
<comment type="subcellular location">
    <subcellularLocation>
        <location evidence="4 5">Cytoplasm</location>
    </subcellularLocation>
    <subcellularLocation>
        <location evidence="4 5">Nucleus</location>
    </subcellularLocation>
    <text evidence="4 5">Polyribosome-associated (PubMed:12588979). Localizes predominantly in the nucleus at the G1/G2 phases and the beginning of S phase (PubMed:12588979). Through the S phase, partially redistributes to the cytoplasm (PubMed:12588979). Binding to histone mRNA is necessary for cytoplasmic localization (PubMed:12588979). Shuttles between the nucleus and the cytoplasm (PubMed:15829567). Imported in the nucleus by the Importin alpha/Importin beta receptor (PubMed:15829567).</text>
</comment>
<comment type="alternative products">
    <event type="alternative splicing"/>
    <isoform>
        <id>Q14493-1</id>
        <name>1</name>
        <sequence type="displayed"/>
    </isoform>
    <isoform>
        <id>Q14493-2</id>
        <name>2</name>
        <sequence type="described" ref="VSP_042164"/>
    </isoform>
</comment>
<comment type="tissue specificity">
    <text evidence="15">Widely expressed.</text>
</comment>
<comment type="developmental stage">
    <text>Regulated during the cell cycle: protein levels increase 10 to 20 fold in the late G1 and decrease at the S/G2 border.</text>
</comment>
<comment type="domain">
    <text evidence="5">Amino acids 31-34, 96-99 and 241-244 are necessary for interaction with the Importin alpha/Importin beta receptor. The first 18 amino acids, amino acids 69-76 and 179-182 are necessary for interaction with TNPO3. Amino acids 31-34, 96-99 and 241-244 are necessary for nuclear localization.</text>
</comment>
<comment type="PTM">
    <text evidence="4 10 12">Phosphorylated on Thr-61 and Thr-62 in the S-phase. Phosphorylation of Thr-62 by CDK1 primes phosphorylation of Thr-61 by CK2. Phosphorylation of Thr-62 is required for its degradation by the proteasome at the end of the S phase. Its degradation is not required for histone mRNA degradation at the end of the S phase. All the phosphorylated forms detected are present in the cytoplasm. Both unphosphorylated and phosphorylated forms bind the stem-loop structure of histone mRNAs. Phosphorylation at Thr-171 increases affinity for histone mRNAs.</text>
</comment>
<comment type="PTM">
    <text evidence="13">Ubiquitinated by the CRL2(FEM1A), CRL2(FEM1B) and CRL2(FEM1C) complexes, leading to its degradation.</text>
</comment>
<comment type="similarity">
    <text evidence="17">Belongs to the SLBP family.</text>
</comment>
<organism>
    <name type="scientific">Homo sapiens</name>
    <name type="common">Human</name>
    <dbReference type="NCBI Taxonomy" id="9606"/>
    <lineage>
        <taxon>Eukaryota</taxon>
        <taxon>Metazoa</taxon>
        <taxon>Chordata</taxon>
        <taxon>Craniata</taxon>
        <taxon>Vertebrata</taxon>
        <taxon>Euteleostomi</taxon>
        <taxon>Mammalia</taxon>
        <taxon>Eutheria</taxon>
        <taxon>Euarchontoglires</taxon>
        <taxon>Primates</taxon>
        <taxon>Haplorrhini</taxon>
        <taxon>Catarrhini</taxon>
        <taxon>Hominidae</taxon>
        <taxon>Homo</taxon>
    </lineage>
</organism>
<keyword id="KW-0002">3D-structure</keyword>
<keyword id="KW-0025">Alternative splicing</keyword>
<keyword id="KW-0963">Cytoplasm</keyword>
<keyword id="KW-1017">Isopeptide bond</keyword>
<keyword id="KW-0507">mRNA processing</keyword>
<keyword id="KW-0539">Nucleus</keyword>
<keyword id="KW-0597">Phosphoprotein</keyword>
<keyword id="KW-1267">Proteomics identification</keyword>
<keyword id="KW-1185">Reference proteome</keyword>
<keyword id="KW-0687">Ribonucleoprotein</keyword>
<keyword id="KW-0694">RNA-binding</keyword>
<keyword id="KW-0832">Ubl conjugation</keyword>